<keyword id="KW-0030">Aminoacyl-tRNA synthetase</keyword>
<keyword id="KW-0067">ATP-binding</keyword>
<keyword id="KW-0963">Cytoplasm</keyword>
<keyword id="KW-0436">Ligase</keyword>
<keyword id="KW-0547">Nucleotide-binding</keyword>
<keyword id="KW-0648">Protein biosynthesis</keyword>
<gene>
    <name evidence="1" type="primary">serS</name>
    <name type="ordered locus">ROP_39200</name>
</gene>
<comment type="function">
    <text evidence="1">Catalyzes the attachment of serine to tRNA(Ser). Is also able to aminoacylate tRNA(Sec) with serine, to form the misacylated tRNA L-seryl-tRNA(Sec), which will be further converted into selenocysteinyl-tRNA(Sec).</text>
</comment>
<comment type="catalytic activity">
    <reaction evidence="1">
        <text>tRNA(Ser) + L-serine + ATP = L-seryl-tRNA(Ser) + AMP + diphosphate + H(+)</text>
        <dbReference type="Rhea" id="RHEA:12292"/>
        <dbReference type="Rhea" id="RHEA-COMP:9669"/>
        <dbReference type="Rhea" id="RHEA-COMP:9703"/>
        <dbReference type="ChEBI" id="CHEBI:15378"/>
        <dbReference type="ChEBI" id="CHEBI:30616"/>
        <dbReference type="ChEBI" id="CHEBI:33019"/>
        <dbReference type="ChEBI" id="CHEBI:33384"/>
        <dbReference type="ChEBI" id="CHEBI:78442"/>
        <dbReference type="ChEBI" id="CHEBI:78533"/>
        <dbReference type="ChEBI" id="CHEBI:456215"/>
        <dbReference type="EC" id="6.1.1.11"/>
    </reaction>
</comment>
<comment type="catalytic activity">
    <reaction evidence="1">
        <text>tRNA(Sec) + L-serine + ATP = L-seryl-tRNA(Sec) + AMP + diphosphate + H(+)</text>
        <dbReference type="Rhea" id="RHEA:42580"/>
        <dbReference type="Rhea" id="RHEA-COMP:9742"/>
        <dbReference type="Rhea" id="RHEA-COMP:10128"/>
        <dbReference type="ChEBI" id="CHEBI:15378"/>
        <dbReference type="ChEBI" id="CHEBI:30616"/>
        <dbReference type="ChEBI" id="CHEBI:33019"/>
        <dbReference type="ChEBI" id="CHEBI:33384"/>
        <dbReference type="ChEBI" id="CHEBI:78442"/>
        <dbReference type="ChEBI" id="CHEBI:78533"/>
        <dbReference type="ChEBI" id="CHEBI:456215"/>
        <dbReference type="EC" id="6.1.1.11"/>
    </reaction>
</comment>
<comment type="pathway">
    <text evidence="1">Aminoacyl-tRNA biosynthesis; selenocysteinyl-tRNA(Sec) biosynthesis; L-seryl-tRNA(Sec) from L-serine and tRNA(Sec): step 1/1.</text>
</comment>
<comment type="subunit">
    <text evidence="1">Homodimer. The tRNA molecule binds across the dimer.</text>
</comment>
<comment type="subcellular location">
    <subcellularLocation>
        <location evidence="1">Cytoplasm</location>
    </subcellularLocation>
</comment>
<comment type="domain">
    <text evidence="1">Consists of two distinct domains, a catalytic core and a N-terminal extension that is involved in tRNA binding.</text>
</comment>
<comment type="similarity">
    <text evidence="1">Belongs to the class-II aminoacyl-tRNA synthetase family. Type-1 seryl-tRNA synthetase subfamily.</text>
</comment>
<dbReference type="EC" id="6.1.1.11" evidence="1"/>
<dbReference type="EMBL" id="AP011115">
    <property type="protein sequence ID" value="BAH52167.1"/>
    <property type="molecule type" value="Genomic_DNA"/>
</dbReference>
<dbReference type="RefSeq" id="WP_012691105.1">
    <property type="nucleotide sequence ID" value="NC_012522.1"/>
</dbReference>
<dbReference type="SMR" id="C1B914"/>
<dbReference type="STRING" id="632772.ROP_39200"/>
<dbReference type="KEGG" id="rop:ROP_39200"/>
<dbReference type="PATRIC" id="fig|632772.20.peg.4113"/>
<dbReference type="HOGENOM" id="CLU_023797_0_1_11"/>
<dbReference type="OrthoDB" id="9804647at2"/>
<dbReference type="UniPathway" id="UPA00906">
    <property type="reaction ID" value="UER00895"/>
</dbReference>
<dbReference type="Proteomes" id="UP000002212">
    <property type="component" value="Chromosome"/>
</dbReference>
<dbReference type="GO" id="GO:0005737">
    <property type="term" value="C:cytoplasm"/>
    <property type="evidence" value="ECO:0007669"/>
    <property type="project" value="UniProtKB-SubCell"/>
</dbReference>
<dbReference type="GO" id="GO:0005524">
    <property type="term" value="F:ATP binding"/>
    <property type="evidence" value="ECO:0007669"/>
    <property type="project" value="UniProtKB-UniRule"/>
</dbReference>
<dbReference type="GO" id="GO:0004828">
    <property type="term" value="F:serine-tRNA ligase activity"/>
    <property type="evidence" value="ECO:0007669"/>
    <property type="project" value="UniProtKB-UniRule"/>
</dbReference>
<dbReference type="GO" id="GO:0016260">
    <property type="term" value="P:selenocysteine biosynthetic process"/>
    <property type="evidence" value="ECO:0007669"/>
    <property type="project" value="UniProtKB-UniRule"/>
</dbReference>
<dbReference type="GO" id="GO:0006434">
    <property type="term" value="P:seryl-tRNA aminoacylation"/>
    <property type="evidence" value="ECO:0007669"/>
    <property type="project" value="UniProtKB-UniRule"/>
</dbReference>
<dbReference type="CDD" id="cd00770">
    <property type="entry name" value="SerRS_core"/>
    <property type="match status" value="1"/>
</dbReference>
<dbReference type="FunFam" id="1.10.287.40:FF:000004">
    <property type="entry name" value="Serine--tRNA ligase"/>
    <property type="match status" value="1"/>
</dbReference>
<dbReference type="Gene3D" id="3.30.930.10">
    <property type="entry name" value="Bira Bifunctional Protein, Domain 2"/>
    <property type="match status" value="1"/>
</dbReference>
<dbReference type="Gene3D" id="1.10.287.40">
    <property type="entry name" value="Serine-tRNA synthetase, tRNA binding domain"/>
    <property type="match status" value="1"/>
</dbReference>
<dbReference type="HAMAP" id="MF_00176">
    <property type="entry name" value="Ser_tRNA_synth_type1"/>
    <property type="match status" value="1"/>
</dbReference>
<dbReference type="InterPro" id="IPR002314">
    <property type="entry name" value="aa-tRNA-synt_IIb"/>
</dbReference>
<dbReference type="InterPro" id="IPR006195">
    <property type="entry name" value="aa-tRNA-synth_II"/>
</dbReference>
<dbReference type="InterPro" id="IPR045864">
    <property type="entry name" value="aa-tRNA-synth_II/BPL/LPL"/>
</dbReference>
<dbReference type="InterPro" id="IPR002317">
    <property type="entry name" value="Ser-tRNA-ligase_type_1"/>
</dbReference>
<dbReference type="InterPro" id="IPR015866">
    <property type="entry name" value="Ser-tRNA-synth_1_N"/>
</dbReference>
<dbReference type="InterPro" id="IPR042103">
    <property type="entry name" value="SerRS_1_N_sf"/>
</dbReference>
<dbReference type="InterPro" id="IPR033729">
    <property type="entry name" value="SerRS_core"/>
</dbReference>
<dbReference type="InterPro" id="IPR010978">
    <property type="entry name" value="tRNA-bd_arm"/>
</dbReference>
<dbReference type="NCBIfam" id="TIGR00414">
    <property type="entry name" value="serS"/>
    <property type="match status" value="1"/>
</dbReference>
<dbReference type="PANTHER" id="PTHR11778">
    <property type="entry name" value="SERYL-TRNA SYNTHETASE"/>
    <property type="match status" value="1"/>
</dbReference>
<dbReference type="Pfam" id="PF02403">
    <property type="entry name" value="Seryl_tRNA_N"/>
    <property type="match status" value="1"/>
</dbReference>
<dbReference type="Pfam" id="PF00587">
    <property type="entry name" value="tRNA-synt_2b"/>
    <property type="match status" value="1"/>
</dbReference>
<dbReference type="PIRSF" id="PIRSF001529">
    <property type="entry name" value="Ser-tRNA-synth_IIa"/>
    <property type="match status" value="1"/>
</dbReference>
<dbReference type="PRINTS" id="PR00981">
    <property type="entry name" value="TRNASYNTHSER"/>
</dbReference>
<dbReference type="SUPFAM" id="SSF55681">
    <property type="entry name" value="Class II aaRS and biotin synthetases"/>
    <property type="match status" value="1"/>
</dbReference>
<dbReference type="SUPFAM" id="SSF46589">
    <property type="entry name" value="tRNA-binding arm"/>
    <property type="match status" value="1"/>
</dbReference>
<dbReference type="PROSITE" id="PS50862">
    <property type="entry name" value="AA_TRNA_LIGASE_II"/>
    <property type="match status" value="1"/>
</dbReference>
<evidence type="ECO:0000255" key="1">
    <source>
        <dbReference type="HAMAP-Rule" id="MF_00176"/>
    </source>
</evidence>
<sequence length="418" mass="45591">MIDLKFLRENPDAVRESQRTRGEDPALVDALLEADASRRAAVLAGDNLRAEQKAFGKKVGQASPEERPALLEGSKELAAKVKQAEAGQHEAQAALDAAHRAISNIVQDGAPAGGEDDFITLETVGEIPAFDFEPKDHLELGESLGLIDMERGAKVSGARFYFLTGFGAMLQLGMLQLAAQKAMANGFQMMIPPVLVRPEIMAGTGFLGAHSDEIYHLADDDLYLVGTSEVPLAGYHSGEILDLADGPKRYAGWSTCFRREAGSYGKDTRGIIRVHQFDKVEMFTYCKPEDADAEHQRLLAWERDMLAAIDVPYRVIDVAGGDLGSSAARKFDCEAWVPTQQAYRELTSTSNCTTFQARRLGVRYRDENGKPQTAATLNGTLATTRWIVAILENHQQSDGTVRVPEALVPFVGTDVLKP</sequence>
<name>SYS_RHOOB</name>
<organism>
    <name type="scientific">Rhodococcus opacus (strain B4)</name>
    <dbReference type="NCBI Taxonomy" id="632772"/>
    <lineage>
        <taxon>Bacteria</taxon>
        <taxon>Bacillati</taxon>
        <taxon>Actinomycetota</taxon>
        <taxon>Actinomycetes</taxon>
        <taxon>Mycobacteriales</taxon>
        <taxon>Nocardiaceae</taxon>
        <taxon>Rhodococcus</taxon>
    </lineage>
</organism>
<proteinExistence type="inferred from homology"/>
<feature type="chain" id="PRO_1000199500" description="Serine--tRNA ligase">
    <location>
        <begin position="1"/>
        <end position="418"/>
    </location>
</feature>
<feature type="binding site" evidence="1">
    <location>
        <begin position="227"/>
        <end position="229"/>
    </location>
    <ligand>
        <name>L-serine</name>
        <dbReference type="ChEBI" id="CHEBI:33384"/>
    </ligand>
</feature>
<feature type="binding site" evidence="1">
    <location>
        <begin position="258"/>
        <end position="260"/>
    </location>
    <ligand>
        <name>ATP</name>
        <dbReference type="ChEBI" id="CHEBI:30616"/>
    </ligand>
</feature>
<feature type="binding site" evidence="1">
    <location>
        <position position="274"/>
    </location>
    <ligand>
        <name>ATP</name>
        <dbReference type="ChEBI" id="CHEBI:30616"/>
    </ligand>
</feature>
<feature type="binding site" evidence="1">
    <location>
        <position position="281"/>
    </location>
    <ligand>
        <name>L-serine</name>
        <dbReference type="ChEBI" id="CHEBI:33384"/>
    </ligand>
</feature>
<feature type="binding site" evidence="1">
    <location>
        <begin position="345"/>
        <end position="348"/>
    </location>
    <ligand>
        <name>ATP</name>
        <dbReference type="ChEBI" id="CHEBI:30616"/>
    </ligand>
</feature>
<feature type="binding site" evidence="1">
    <location>
        <position position="380"/>
    </location>
    <ligand>
        <name>L-serine</name>
        <dbReference type="ChEBI" id="CHEBI:33384"/>
    </ligand>
</feature>
<reference key="1">
    <citation type="submission" date="2009-03" db="EMBL/GenBank/DDBJ databases">
        <title>Comparison of the complete genome sequences of Rhodococcus erythropolis PR4 and Rhodococcus opacus B4.</title>
        <authorList>
            <person name="Takarada H."/>
            <person name="Sekine M."/>
            <person name="Hosoyama A."/>
            <person name="Yamada R."/>
            <person name="Fujisawa T."/>
            <person name="Omata S."/>
            <person name="Shimizu A."/>
            <person name="Tsukatani N."/>
            <person name="Tanikawa S."/>
            <person name="Fujita N."/>
            <person name="Harayama S."/>
        </authorList>
    </citation>
    <scope>NUCLEOTIDE SEQUENCE [LARGE SCALE GENOMIC DNA]</scope>
    <source>
        <strain>B4</strain>
    </source>
</reference>
<protein>
    <recommendedName>
        <fullName evidence="1">Serine--tRNA ligase</fullName>
        <ecNumber evidence="1">6.1.1.11</ecNumber>
    </recommendedName>
    <alternativeName>
        <fullName evidence="1">Seryl-tRNA synthetase</fullName>
        <shortName evidence="1">SerRS</shortName>
    </alternativeName>
    <alternativeName>
        <fullName evidence="1">Seryl-tRNA(Ser/Sec) synthetase</fullName>
    </alternativeName>
</protein>
<accession>C1B914</accession>